<accession>A6MMU8</accession>
<dbReference type="EC" id="7.1.1.-" evidence="1"/>
<dbReference type="EMBL" id="EF380354">
    <property type="protein sequence ID" value="ABQ52523.1"/>
    <property type="status" value="ALT_INIT"/>
    <property type="molecule type" value="Genomic_DNA"/>
</dbReference>
<dbReference type="RefSeq" id="YP_001294274.2">
    <property type="nucleotide sequence ID" value="NC_009600.1"/>
</dbReference>
<dbReference type="SMR" id="A6MMU8"/>
<dbReference type="GeneID" id="5236807"/>
<dbReference type="GO" id="GO:0009535">
    <property type="term" value="C:chloroplast thylakoid membrane"/>
    <property type="evidence" value="ECO:0007669"/>
    <property type="project" value="UniProtKB-SubCell"/>
</dbReference>
<dbReference type="GO" id="GO:0045271">
    <property type="term" value="C:respiratory chain complex I"/>
    <property type="evidence" value="ECO:0007669"/>
    <property type="project" value="TreeGrafter"/>
</dbReference>
<dbReference type="GO" id="GO:0051539">
    <property type="term" value="F:4 iron, 4 sulfur cluster binding"/>
    <property type="evidence" value="ECO:0007669"/>
    <property type="project" value="UniProtKB-KW"/>
</dbReference>
<dbReference type="GO" id="GO:0005506">
    <property type="term" value="F:iron ion binding"/>
    <property type="evidence" value="ECO:0007669"/>
    <property type="project" value="UniProtKB-UniRule"/>
</dbReference>
<dbReference type="GO" id="GO:0008137">
    <property type="term" value="F:NADH dehydrogenase (ubiquinone) activity"/>
    <property type="evidence" value="ECO:0007669"/>
    <property type="project" value="InterPro"/>
</dbReference>
<dbReference type="GO" id="GO:0048038">
    <property type="term" value="F:quinone binding"/>
    <property type="evidence" value="ECO:0007669"/>
    <property type="project" value="UniProtKB-KW"/>
</dbReference>
<dbReference type="GO" id="GO:0009060">
    <property type="term" value="P:aerobic respiration"/>
    <property type="evidence" value="ECO:0007669"/>
    <property type="project" value="TreeGrafter"/>
</dbReference>
<dbReference type="GO" id="GO:0015990">
    <property type="term" value="P:electron transport coupled proton transport"/>
    <property type="evidence" value="ECO:0007669"/>
    <property type="project" value="TreeGrafter"/>
</dbReference>
<dbReference type="GO" id="GO:0019684">
    <property type="term" value="P:photosynthesis, light reaction"/>
    <property type="evidence" value="ECO:0007669"/>
    <property type="project" value="UniProtKB-UniRule"/>
</dbReference>
<dbReference type="FunFam" id="3.40.50.12280:FF:000003">
    <property type="entry name" value="NAD(P)H-quinone oxidoreductase subunit K, chloroplastic"/>
    <property type="match status" value="1"/>
</dbReference>
<dbReference type="Gene3D" id="3.40.50.12280">
    <property type="match status" value="1"/>
</dbReference>
<dbReference type="HAMAP" id="MF_01356">
    <property type="entry name" value="NDH1_NuoB"/>
    <property type="match status" value="1"/>
</dbReference>
<dbReference type="InterPro" id="IPR006137">
    <property type="entry name" value="NADH_UbQ_OxRdtase-like_20kDa"/>
</dbReference>
<dbReference type="InterPro" id="IPR006138">
    <property type="entry name" value="NADH_UQ_OxRdtase_20Kd_su"/>
</dbReference>
<dbReference type="NCBIfam" id="TIGR01957">
    <property type="entry name" value="nuoB_fam"/>
    <property type="match status" value="1"/>
</dbReference>
<dbReference type="NCBIfam" id="NF005012">
    <property type="entry name" value="PRK06411.1"/>
    <property type="match status" value="1"/>
</dbReference>
<dbReference type="PANTHER" id="PTHR11995">
    <property type="entry name" value="NADH DEHYDROGENASE"/>
    <property type="match status" value="1"/>
</dbReference>
<dbReference type="PANTHER" id="PTHR11995:SF14">
    <property type="entry name" value="NADH DEHYDROGENASE [UBIQUINONE] IRON-SULFUR PROTEIN 7, MITOCHONDRIAL"/>
    <property type="match status" value="1"/>
</dbReference>
<dbReference type="Pfam" id="PF01058">
    <property type="entry name" value="Oxidored_q6"/>
    <property type="match status" value="1"/>
</dbReference>
<dbReference type="SUPFAM" id="SSF56770">
    <property type="entry name" value="HydA/Nqo6-like"/>
    <property type="match status" value="1"/>
</dbReference>
<dbReference type="PROSITE" id="PS01150">
    <property type="entry name" value="COMPLEX1_20K"/>
    <property type="match status" value="1"/>
</dbReference>
<feature type="chain" id="PRO_0000358550" description="NAD(P)H-quinone oxidoreductase subunit K, chloroplastic">
    <location>
        <begin position="1"/>
        <end position="225"/>
    </location>
</feature>
<feature type="binding site" evidence="1">
    <location>
        <position position="43"/>
    </location>
    <ligand>
        <name>[4Fe-4S] cluster</name>
        <dbReference type="ChEBI" id="CHEBI:49883"/>
    </ligand>
</feature>
<feature type="binding site" evidence="1">
    <location>
        <position position="44"/>
    </location>
    <ligand>
        <name>[4Fe-4S] cluster</name>
        <dbReference type="ChEBI" id="CHEBI:49883"/>
    </ligand>
</feature>
<feature type="binding site" evidence="1">
    <location>
        <position position="108"/>
    </location>
    <ligand>
        <name>[4Fe-4S] cluster</name>
        <dbReference type="ChEBI" id="CHEBI:49883"/>
    </ligand>
</feature>
<feature type="binding site" evidence="1">
    <location>
        <position position="139"/>
    </location>
    <ligand>
        <name>[4Fe-4S] cluster</name>
        <dbReference type="ChEBI" id="CHEBI:49883"/>
    </ligand>
</feature>
<geneLocation type="chloroplast"/>
<keyword id="KW-0004">4Fe-4S</keyword>
<keyword id="KW-0150">Chloroplast</keyword>
<keyword id="KW-0408">Iron</keyword>
<keyword id="KW-0411">Iron-sulfur</keyword>
<keyword id="KW-0472">Membrane</keyword>
<keyword id="KW-0479">Metal-binding</keyword>
<keyword id="KW-0520">NAD</keyword>
<keyword id="KW-0521">NADP</keyword>
<keyword id="KW-0934">Plastid</keyword>
<keyword id="KW-0618">Plastoquinone</keyword>
<keyword id="KW-0874">Quinone</keyword>
<keyword id="KW-0793">Thylakoid</keyword>
<keyword id="KW-1278">Translocase</keyword>
<keyword id="KW-0813">Transport</keyword>
<name>NDHK_ILLOL</name>
<protein>
    <recommendedName>
        <fullName evidence="1">NAD(P)H-quinone oxidoreductase subunit K, chloroplastic</fullName>
        <ecNumber evidence="1">7.1.1.-</ecNumber>
    </recommendedName>
    <alternativeName>
        <fullName evidence="1">NAD(P)H dehydrogenase subunit K</fullName>
    </alternativeName>
    <alternativeName>
        <fullName evidence="1">NADH-plastoquinone oxidoreductase subunit K</fullName>
    </alternativeName>
</protein>
<gene>
    <name evidence="1" type="primary">ndhK</name>
</gene>
<comment type="function">
    <text evidence="1">NDH shuttles electrons from NAD(P)H:plastoquinone, via FMN and iron-sulfur (Fe-S) centers, to quinones in the photosynthetic chain and possibly in a chloroplast respiratory chain. The immediate electron acceptor for the enzyme in this species is believed to be plastoquinone. Couples the redox reaction to proton translocation, and thus conserves the redox energy in a proton gradient.</text>
</comment>
<comment type="catalytic activity">
    <reaction evidence="1">
        <text>a plastoquinone + NADH + (n+1) H(+)(in) = a plastoquinol + NAD(+) + n H(+)(out)</text>
        <dbReference type="Rhea" id="RHEA:42608"/>
        <dbReference type="Rhea" id="RHEA-COMP:9561"/>
        <dbReference type="Rhea" id="RHEA-COMP:9562"/>
        <dbReference type="ChEBI" id="CHEBI:15378"/>
        <dbReference type="ChEBI" id="CHEBI:17757"/>
        <dbReference type="ChEBI" id="CHEBI:57540"/>
        <dbReference type="ChEBI" id="CHEBI:57945"/>
        <dbReference type="ChEBI" id="CHEBI:62192"/>
    </reaction>
</comment>
<comment type="catalytic activity">
    <reaction evidence="1">
        <text>a plastoquinone + NADPH + (n+1) H(+)(in) = a plastoquinol + NADP(+) + n H(+)(out)</text>
        <dbReference type="Rhea" id="RHEA:42612"/>
        <dbReference type="Rhea" id="RHEA-COMP:9561"/>
        <dbReference type="Rhea" id="RHEA-COMP:9562"/>
        <dbReference type="ChEBI" id="CHEBI:15378"/>
        <dbReference type="ChEBI" id="CHEBI:17757"/>
        <dbReference type="ChEBI" id="CHEBI:57783"/>
        <dbReference type="ChEBI" id="CHEBI:58349"/>
        <dbReference type="ChEBI" id="CHEBI:62192"/>
    </reaction>
</comment>
<comment type="cofactor">
    <cofactor evidence="1">
        <name>[4Fe-4S] cluster</name>
        <dbReference type="ChEBI" id="CHEBI:49883"/>
    </cofactor>
    <text evidence="1">Binds 1 [4Fe-4S] cluster.</text>
</comment>
<comment type="subunit">
    <text evidence="1">NDH is composed of at least 16 different subunits, 5 of which are encoded in the nucleus.</text>
</comment>
<comment type="subcellular location">
    <subcellularLocation>
        <location evidence="1">Plastid</location>
        <location evidence="1">Chloroplast thylakoid membrane</location>
        <topology evidence="1">Peripheral membrane protein</topology>
        <orientation evidence="1">Stromal side</orientation>
    </subcellularLocation>
</comment>
<comment type="similarity">
    <text evidence="1">Belongs to the complex I 20 kDa subunit family.</text>
</comment>
<comment type="sequence caution" evidence="2">
    <conflict type="erroneous initiation">
        <sequence resource="EMBL-CDS" id="ABQ52523"/>
    </conflict>
</comment>
<proteinExistence type="inferred from homology"/>
<organism>
    <name type="scientific">Illicium oligandrum</name>
    <name type="common">Star anise</name>
    <dbReference type="NCBI Taxonomy" id="145286"/>
    <lineage>
        <taxon>Eukaryota</taxon>
        <taxon>Viridiplantae</taxon>
        <taxon>Streptophyta</taxon>
        <taxon>Embryophyta</taxon>
        <taxon>Tracheophyta</taxon>
        <taxon>Spermatophyta</taxon>
        <taxon>Magnoliopsida</taxon>
        <taxon>Austrobaileyales</taxon>
        <taxon>Schisandraceae</taxon>
        <taxon>Illicium</taxon>
    </lineage>
</organism>
<reference key="1">
    <citation type="journal article" date="2007" name="Mol. Phylogenet. Evol.">
        <title>Phylogenetic and evolutionary implications of complete chloroplast genome sequences of four early-diverging angiosperms: Buxus (Buxaceae), Chloranthus (Chloranthaceae), Dioscorea (Dioscoreaceae), and Illicium (Schisandraceae).</title>
        <authorList>
            <person name="Hansen D.R."/>
            <person name="Dastidar S.G."/>
            <person name="Cai Z."/>
            <person name="Penaflor C."/>
            <person name="Kuehl J.V."/>
            <person name="Boore J.L."/>
            <person name="Jansen R.K."/>
        </authorList>
    </citation>
    <scope>NUCLEOTIDE SEQUENCE [LARGE SCALE GENOMIC DNA]</scope>
</reference>
<evidence type="ECO:0000255" key="1">
    <source>
        <dbReference type="HAMAP-Rule" id="MF_01356"/>
    </source>
</evidence>
<evidence type="ECO:0000305" key="2"/>
<sequence length="225" mass="25302">MNSMRFSLLDRTTQNSVISTTSNDLSNWSRLSSLWPLLYGTSCCFIEFASLIGSRFDFDRYGLVPRSSPRQADIILTAGTVTMKMAPSLVRLYEQMPEPKYVIAMGACTITGGMFSTDSYSTVRGVDKLIPVDVYLPGCPPKPEAIIDAITKLRKKLSREIYEDRIGCQQENRCFTTNHKFRVGRSTHTGNYDQGLLYQSPSTSEIPFESFLKYKSSVSSHELVN</sequence>